<organism>
    <name type="scientific">Pisum sativum</name>
    <name type="common">Garden pea</name>
    <name type="synonym">Lathyrus oleraceus</name>
    <dbReference type="NCBI Taxonomy" id="3888"/>
    <lineage>
        <taxon>Eukaryota</taxon>
        <taxon>Viridiplantae</taxon>
        <taxon>Streptophyta</taxon>
        <taxon>Embryophyta</taxon>
        <taxon>Tracheophyta</taxon>
        <taxon>Spermatophyta</taxon>
        <taxon>Magnoliopsida</taxon>
        <taxon>eudicotyledons</taxon>
        <taxon>Gunneridae</taxon>
        <taxon>Pentapetalae</taxon>
        <taxon>rosids</taxon>
        <taxon>fabids</taxon>
        <taxon>Fabales</taxon>
        <taxon>Fabaceae</taxon>
        <taxon>Papilionoideae</taxon>
        <taxon>50 kb inversion clade</taxon>
        <taxon>NPAAA clade</taxon>
        <taxon>Hologalegina</taxon>
        <taxon>IRL clade</taxon>
        <taxon>Fabeae</taxon>
        <taxon>Pisum</taxon>
    </lineage>
</organism>
<protein>
    <recommendedName>
        <fullName evidence="9">Eukaryotic translation initiation factor 4E-1</fullName>
        <shortName evidence="9">eIF-4E-1</shortName>
        <shortName evidence="9">eIF4E-1</shortName>
    </recommendedName>
    <alternativeName>
        <fullName evidence="10">eIF-4F 25 kDa subunit</fullName>
    </alternativeName>
    <alternativeName>
        <fullName evidence="10">eIF-4F p26 subunit</fullName>
    </alternativeName>
    <alternativeName>
        <fullName evidence="9">mRNA cap-binding protein</fullName>
    </alternativeName>
</protein>
<name>IF4E1_PEA</name>
<evidence type="ECO:0000250" key="1">
    <source>
        <dbReference type="UniProtKB" id="P29557"/>
    </source>
</evidence>
<evidence type="ECO:0000250" key="2">
    <source>
        <dbReference type="UniProtKB" id="Q00LS8"/>
    </source>
</evidence>
<evidence type="ECO:0000269" key="3">
    <source>
    </source>
</evidence>
<evidence type="ECO:0000269" key="4">
    <source>
    </source>
</evidence>
<evidence type="ECO:0000269" key="5">
    <source>
    </source>
</evidence>
<evidence type="ECO:0000269" key="6">
    <source>
    </source>
</evidence>
<evidence type="ECO:0000269" key="7">
    <source ref="3"/>
</evidence>
<evidence type="ECO:0000303" key="8">
    <source>
    </source>
</evidence>
<evidence type="ECO:0000303" key="9">
    <source ref="3"/>
</evidence>
<evidence type="ECO:0000305" key="10"/>
<evidence type="ECO:0000305" key="11">
    <source>
    </source>
</evidence>
<evidence type="ECO:0000305" key="12">
    <source>
    </source>
</evidence>
<evidence type="ECO:0000305" key="13">
    <source>
    </source>
</evidence>
<evidence type="ECO:0000305" key="14">
    <source>
    </source>
</evidence>
<evidence type="ECO:0000305" key="15">
    <source ref="3"/>
</evidence>
<evidence type="ECO:0007744" key="16">
    <source>
        <dbReference type="PDB" id="2WMC"/>
    </source>
</evidence>
<evidence type="ECO:0007829" key="17">
    <source>
        <dbReference type="PDB" id="2WMC"/>
    </source>
</evidence>
<comment type="function">
    <text evidence="3 4 5 6">Component of the protein complex eIF4F, which is involved in the recognition of the mRNA cap, ATP-dependent unwinding of 5'-terminal secondary structure and recruitment of mRNA to the ribosome (PubMed:15469495, PubMed:21283665). Recognizes and binds the 7-methylguanosine-containing mRNA cap during an early step in the initiation of protein synthesis and facilitates ribosome binding by inducing the unwinding of the mRNAs secondary structures (PubMed:15469495, PubMed:21283665). Key component of recessive resistance to potyviruses (PubMed:15469495, PubMed:17849710, PubMed:21283665, PubMed:24609094).</text>
</comment>
<comment type="function">
    <text evidence="3 4 5 6">(Microbial infection) Susceptibility host factor required for viral infection by recruiting viral RNAs to the host ribosomal complex via an interaction with viral genome-linked protein (VPg) (PubMed:15469495, PubMed:17849710, PubMed:21283665, PubMed:24609094). Also seems to be involved in virus movement from cell-to-cell (PubMed:15469495).</text>
</comment>
<comment type="subunit">
    <text evidence="1">EIF4F is a multi-subunit complex, the composition of which varies with external and internal environmental conditions. It is composed of at least EIF4A, EIF4E and EIF4G. EIF4E is also known to interact with other partners. In higher plants two isoforms of EIF4F have been identified, named isoform EIF4F and isoform EIF(iso)4F. Isoform EIF4F has subunits p220 and p26, whereas isoform EIF(iso)4F has subunits p82 and p28.</text>
</comment>
<comment type="subunit">
    <text evidence="11 12 13 14">(Microbial infection) Interacts with potyvirus viral genome-linked protein (VPg); this interaction is possible in susceptible hosts but impaired in resistant plants.</text>
</comment>
<comment type="subcellular location">
    <subcellularLocation>
        <location evidence="5">Nucleus</location>
    </subcellularLocation>
    <subcellularLocation>
        <location evidence="5">Cytoplasm</location>
    </subcellularLocation>
    <text evidence="5">(Microbial infection) Binds to potyvirus viral genome-linked protein (VPg) in the nucleus and with potyvirus nuclear inclusion protein A (NIa-Pro) and nuclear inclusion protein B (NIb) in the cytoplasm.</text>
</comment>
<comment type="PTM">
    <text evidence="1">According to the redox status, the Cys-126-Cys-164 disulfide bridge may have a role in regulating protein function by affecting its ability to bind capped mRNA.</text>
</comment>
<comment type="polymorphism">
    <text evidence="6">Variant present in the strain cv. PI 347464, allele A-5, confers an increased resistance to pea seed-borne mosaic virus (PSbMV) pathotype P1.</text>
</comment>
<comment type="polymorphism">
    <text evidence="6">Variant present in the strain cv. JI 1546, allele A-2, confers an increased resistance to pea seed-borne mosaic virus (PSbMV) pathotype P1.</text>
</comment>
<comment type="polymorphism">
    <text evidence="6">Variant present in the strain cv. JI 1787, allele 1, confers an increased resistance to pea seed-borne mosaic virus (PSbMV) pathotype P1.</text>
</comment>
<comment type="polymorphism">
    <text evidence="6">Variant present in the strains cv. JI 1194, cv. CGN-3311, cv. ATC-7140, cv. ATC-3275, cv. ATC-7134, cv. IPK-477 and cv. CGN-3319, allele B-1, confers an increased resistance to pea seed-borne mosaic virus (PSbMV) pathotype P1.</text>
</comment>
<comment type="polymorphism">
    <text evidence="6">Variant present in the strain cv. CGN-3302, allele A-1, confers an increased resistance to pea seed-borne mosaic virus (PSbMV) pathotype P1.</text>
</comment>
<comment type="polymorphism">
    <text evidence="6">Variant present in the strain cv. PI 269774, allele A-7, confers an increased resistance to pea seed-borne mosaic virus (PSbMV) pathotype P1.</text>
</comment>
<comment type="polymorphism">
    <text evidence="6">Variant present in the strain cv. PI 347328, allele S-2, confers susceptibility to pea seed-borne mosaic virus (PSbMV) pathotype P1.</text>
</comment>
<comment type="polymorphism">
    <text evidence="6">Variant present in the strain cv. JI 2646, allele S-7, confers susceptibility to pea seed-borne mosaic virus (PSbMV) pathotype P1.</text>
</comment>
<comment type="polymorphism">
    <text evidence="6">Variant present in the strains cv. JI 1091 and JI 3001, allele S-1, confers susceptibility to pea seed-borne mosaic virus (PSbMV) pathotype P1.</text>
</comment>
<comment type="polymorphism">
    <text evidence="6">Variant present in the strain cv. JI 1632, allele S-4, confers susceptibility to pea seed-borne mosaic virus (PSbMV) pathotype P1.</text>
</comment>
<comment type="polymorphism">
    <text evidence="6">Variant present in the strain cv. JI 2630, allele S-1, confers susceptibility to pea seed-borne mosaic virus (PSbMV) pathotype P1.</text>
</comment>
<comment type="polymorphism">
    <text evidence="3 5 6">Variant present in the strains cv. JI 2643, cv. Fjord, cv. JI 261, cv. JI 194, cv. JI 205, cv. JI 1109, cv. JI 267, cv. PI 505122, cv. PI 639981, cv. JI 1104, cv. JI 1108, cv. ATC-6927, cv. ATC-7173, cv. JI 1758, cv. JI 1030, cv. JI 190, cv. PI 357290, cv. JI 193, cv. JI 2607, cv. JI 2571, cv. JI 1107, cv. JI 1085, cv. JI 2065, cv. JI 1121, cv. JI 1756, cv. JI 182 and cv. JI 3157, alleles S-1, eIF4E(S) and C-1, confers susceptibility to pea seed-borne mosaic virus (PSbMV).</text>
</comment>
<comment type="polymorphism">
    <text evidence="4">Variant present in the strain cv. Dark skinned Perfection, confers susceptibility to bean yellow mosaic virus (BYMV) pathotype W.</text>
</comment>
<comment type="polymorphism">
    <text evidence="3 5">Variant present in the strains cv. JI 2009, alleles susceptible and SBM1, confers susceptibility to pea seed-borne mosaic virus (PSbMV) pathotypes 1 and 4.</text>
</comment>
<comment type="polymorphism">
    <text evidence="3 5">Variant present in the strain cv. JI 1405, allele resistant-1, confers an increased resistance to pea seed-borne mosaic virus (PSbMV) pathotype P1.</text>
</comment>
<comment type="polymorphism">
    <text evidence="3 6">Variant present in the strain cv. PI 269818, alleles resistant-2, sbm1, eIF4E(R) and A-6, confers an increased resistance to pea seed-borne mosaic virus (PSbMV) pathotype P1.</text>
</comment>
<comment type="polymorphism">
    <text evidence="4">Variant present in the strain cv. Bonneville, confers susceptibility to bean yellow mosaic virus (BYMV) pathotype W.</text>
</comment>
<comment type="polymorphism">
    <text evidence="4">Variant present in the strain cv. Brutus, confers susceptibility to bean yellow mosaic virus (BYMV) pathotype W.</text>
</comment>
<comment type="polymorphism">
    <text evidence="6">Variant present in the strain cv. JI 1007, allele S-5, confers susceptibility to pea seed-borne mosaic virus (PSbMV) pathotype P1.</text>
</comment>
<comment type="polymorphism">
    <text evidence="6">Variant present in the strain cv. JI 1010, allele S-6, confers susceptibility to pea seed-borne mosaic virus (PSbMV) pathotype P1.</text>
</comment>
<comment type="polymorphism">
    <text evidence="6">Variant present in the strains cv. PI 347422, cv. ATC-6931 and cv. PI 347484, allele S-3, confers susceptibility to pea seed-borne mosaic virus (PSbMV) pathotype P1.</text>
</comment>
<comment type="polymorphism">
    <text evidence="6">Variant present in the strain cv. JI 1845, allele S-1, confers susceptibility to pea seed-borne mosaic virus (PSbMV) pathotype P1.</text>
</comment>
<comment type="polymorphism">
    <text evidence="6">Variant present in the strain cv. JI 1090, allele B-3, confers an increased resistance to pea seed-borne mosaic virus (PSbMV) pathotype P1.</text>
</comment>
<comment type="polymorphism">
    <text evidence="6">Variant present in the strain cv. JI 1370, allele B-2, confers an increased resistance to pea seed-borne mosaic virus (PSbMV) pathotype P1.</text>
</comment>
<comment type="polymorphism">
    <text evidence="6">Variant present in the strain cv. PI 378158, allele A-4, confers an increased resistance to pea seed-borne mosaic virus (PSbMV) pathotype P1.</text>
</comment>
<comment type="polymorphism">
    <text evidence="6">Variant present in the strain cv. VIR 1589, allele C-2, confers an increased resistance to pea seed-borne mosaic virus (PSbMV) pathotype P1.</text>
</comment>
<comment type="miscellaneous">
    <text evidence="12 14 15">Displayed sequence is in strains cv. JI 967, cv. IPK-468, cv. JI 1788, cv. IPK-479, cv. PI 193586, cv. PI 193835, cv. PI 347494, cv. JI 467, cv. JI 1260, cv. JI 1790, cv. ATC-1044, cv. PI 116056, cv. PI 193835, cv. PI 356991, cv. PI 356992, cv. PI 347464, cv. PI 249645, cv. PI 193584 and allele A-1 which confers resistance to bean yellow mosaic virus (BYMV) pathotype W and to pea seed-borne mosaic virus (PsBMV).</text>
</comment>
<comment type="similarity">
    <text evidence="10">Belongs to the eukaryotic initiation factor 4E family.</text>
</comment>
<accession>Q0GRC4</accession>
<accession>D9YZE9</accession>
<accession>Q0GRC6</accession>
<accession>Q0GRC7</accession>
<accession>Q0GRC8</accession>
<accession>Q6IZE4</accession>
<accession>Q6IZE5</accession>
<accession>Q6TEC4</accession>
<accession>X4XYN0</accession>
<accession>X4XYN4</accession>
<accession>X4XYN8</accession>
<accession>X4XYP5</accession>
<accession>X4XYQ4</accession>
<accession>X4XYR3</accession>
<accession>X4Y582</accession>
<accession>X4Y586</accession>
<accession>X4Y589</accession>
<accession>X4Y7X3</accession>
<accession>X4Y7Y3</accession>
<accession>X4Y7Y9</accession>
<accession>X4Y813</accession>
<accession>X4YKT5</accession>
<accession>X4YKV9</accession>
<accession>X4YKW5</accession>
<accession>X4YKY3</accession>
<accession>X4YKY6</accession>
<accession>X4YMK2</accession>
<accession>X4YMP3</accession>
<dbReference type="EMBL" id="AY423375">
    <property type="protein sequence ID" value="AAR04332.2"/>
    <property type="molecule type" value="mRNA"/>
</dbReference>
<dbReference type="EMBL" id="AY611423">
    <property type="protein sequence ID" value="AAT44121.1"/>
    <property type="molecule type" value="mRNA"/>
</dbReference>
<dbReference type="EMBL" id="AY611425">
    <property type="protein sequence ID" value="AAT44122.1"/>
    <property type="molecule type" value="mRNA"/>
</dbReference>
<dbReference type="EMBL" id="DQ641470">
    <property type="protein sequence ID" value="ABG35116.1"/>
    <property type="molecule type" value="mRNA"/>
</dbReference>
<dbReference type="EMBL" id="DQ641471">
    <property type="protein sequence ID" value="ABG35117.1"/>
    <property type="molecule type" value="mRNA"/>
</dbReference>
<dbReference type="EMBL" id="DQ641472">
    <property type="protein sequence ID" value="ABG35118.1"/>
    <property type="molecule type" value="mRNA"/>
</dbReference>
<dbReference type="EMBL" id="DQ641473">
    <property type="protein sequence ID" value="ABG35119.1"/>
    <property type="molecule type" value="mRNA"/>
</dbReference>
<dbReference type="EMBL" id="DQ641474">
    <property type="protein sequence ID" value="ABG35120.1"/>
    <property type="molecule type" value="mRNA"/>
</dbReference>
<dbReference type="EMBL" id="GU289734">
    <property type="protein sequence ID" value="ADK97766.1"/>
    <property type="molecule type" value="Genomic_DNA"/>
</dbReference>
<dbReference type="EMBL" id="GU289735">
    <property type="protein sequence ID" value="ADK97767.1"/>
    <property type="molecule type" value="Genomic_DNA"/>
</dbReference>
<dbReference type="EMBL" id="KF053431">
    <property type="protein sequence ID" value="AHV79358.1"/>
    <property type="molecule type" value="Genomic_DNA"/>
</dbReference>
<dbReference type="EMBL" id="KF053432">
    <property type="protein sequence ID" value="AHV79359.1"/>
    <property type="molecule type" value="Genomic_DNA"/>
</dbReference>
<dbReference type="EMBL" id="KF053433">
    <property type="protein sequence ID" value="AHV79360.1"/>
    <property type="molecule type" value="Genomic_DNA"/>
</dbReference>
<dbReference type="EMBL" id="KF053434">
    <property type="protein sequence ID" value="AHV79361.1"/>
    <property type="molecule type" value="Genomic_DNA"/>
</dbReference>
<dbReference type="EMBL" id="KF053435">
    <property type="protein sequence ID" value="AHV79362.1"/>
    <property type="molecule type" value="Genomic_DNA"/>
</dbReference>
<dbReference type="EMBL" id="KF053436">
    <property type="protein sequence ID" value="AHV79363.1"/>
    <property type="molecule type" value="Genomic_DNA"/>
</dbReference>
<dbReference type="EMBL" id="KF053437">
    <property type="protein sequence ID" value="AHV79364.1"/>
    <property type="molecule type" value="Genomic_DNA"/>
</dbReference>
<dbReference type="EMBL" id="KF053438">
    <property type="protein sequence ID" value="AHV79365.1"/>
    <property type="molecule type" value="Genomic_DNA"/>
</dbReference>
<dbReference type="EMBL" id="KF053439">
    <property type="protein sequence ID" value="AHV79366.1"/>
    <property type="molecule type" value="Genomic_DNA"/>
</dbReference>
<dbReference type="EMBL" id="KF053440">
    <property type="protein sequence ID" value="AHV79367.1"/>
    <property type="molecule type" value="Genomic_DNA"/>
</dbReference>
<dbReference type="EMBL" id="KF053441">
    <property type="protein sequence ID" value="AHV79368.1"/>
    <property type="molecule type" value="Genomic_DNA"/>
</dbReference>
<dbReference type="EMBL" id="KF053442">
    <property type="protein sequence ID" value="AHV79369.1"/>
    <property type="molecule type" value="Genomic_DNA"/>
</dbReference>
<dbReference type="EMBL" id="KF053443">
    <property type="protein sequence ID" value="AHV79370.1"/>
    <property type="molecule type" value="Genomic_DNA"/>
</dbReference>
<dbReference type="EMBL" id="KF053444">
    <property type="protein sequence ID" value="AHV79371.1"/>
    <property type="molecule type" value="Genomic_DNA"/>
</dbReference>
<dbReference type="EMBL" id="KF053445">
    <property type="protein sequence ID" value="AHV79372.1"/>
    <property type="molecule type" value="Genomic_DNA"/>
</dbReference>
<dbReference type="EMBL" id="KF053446">
    <property type="protein sequence ID" value="AHV79373.1"/>
    <property type="molecule type" value="Genomic_DNA"/>
</dbReference>
<dbReference type="EMBL" id="KF053447">
    <property type="protein sequence ID" value="AHV79374.1"/>
    <property type="molecule type" value="Genomic_DNA"/>
</dbReference>
<dbReference type="EMBL" id="KF053448">
    <property type="protein sequence ID" value="AHV79375.1"/>
    <property type="molecule type" value="Genomic_DNA"/>
</dbReference>
<dbReference type="EMBL" id="KF053449">
    <property type="protein sequence ID" value="AHV79376.1"/>
    <property type="molecule type" value="Genomic_DNA"/>
</dbReference>
<dbReference type="EMBL" id="KF053450">
    <property type="protein sequence ID" value="AHV79377.1"/>
    <property type="molecule type" value="Genomic_DNA"/>
</dbReference>
<dbReference type="EMBL" id="KF053451">
    <property type="protein sequence ID" value="AHV79378.1"/>
    <property type="molecule type" value="Genomic_DNA"/>
</dbReference>
<dbReference type="EMBL" id="KF053452">
    <property type="protein sequence ID" value="AHV79379.1"/>
    <property type="molecule type" value="Genomic_DNA"/>
</dbReference>
<dbReference type="EMBL" id="KF053453">
    <property type="protein sequence ID" value="AHV79380.1"/>
    <property type="molecule type" value="Genomic_DNA"/>
</dbReference>
<dbReference type="EMBL" id="KF053454">
    <property type="protein sequence ID" value="AHV79381.1"/>
    <property type="molecule type" value="Genomic_DNA"/>
</dbReference>
<dbReference type="EMBL" id="KF053455">
    <property type="protein sequence ID" value="AHV79382.1"/>
    <property type="molecule type" value="Genomic_DNA"/>
</dbReference>
<dbReference type="EMBL" id="KF981386">
    <property type="protein sequence ID" value="AHV79383.1"/>
    <property type="molecule type" value="Genomic_DNA"/>
</dbReference>
<dbReference type="EMBL" id="KF981387">
    <property type="protein sequence ID" value="AHV79384.1"/>
    <property type="molecule type" value="Genomic_DNA"/>
</dbReference>
<dbReference type="EMBL" id="KF981388">
    <property type="protein sequence ID" value="AHV79385.1"/>
    <property type="molecule type" value="Genomic_DNA"/>
</dbReference>
<dbReference type="EMBL" id="KF981389">
    <property type="protein sequence ID" value="AHV79386.1"/>
    <property type="molecule type" value="Genomic_DNA"/>
</dbReference>
<dbReference type="EMBL" id="KF981390">
    <property type="protein sequence ID" value="AHV79387.1"/>
    <property type="molecule type" value="Genomic_DNA"/>
</dbReference>
<dbReference type="EMBL" id="KF981391">
    <property type="protein sequence ID" value="AHV79388.1"/>
    <property type="molecule type" value="Genomic_DNA"/>
</dbReference>
<dbReference type="EMBL" id="KF981392">
    <property type="protein sequence ID" value="AHV79389.1"/>
    <property type="molecule type" value="Genomic_DNA"/>
</dbReference>
<dbReference type="EMBL" id="KF981393">
    <property type="protein sequence ID" value="AHV79390.1"/>
    <property type="molecule type" value="Genomic_DNA"/>
</dbReference>
<dbReference type="EMBL" id="KF981394">
    <property type="protein sequence ID" value="AHV79391.1"/>
    <property type="molecule type" value="Genomic_DNA"/>
</dbReference>
<dbReference type="EMBL" id="KF981395">
    <property type="protein sequence ID" value="AHV79392.1"/>
    <property type="molecule type" value="Genomic_DNA"/>
</dbReference>
<dbReference type="EMBL" id="KF981396">
    <property type="protein sequence ID" value="AHV79393.1"/>
    <property type="molecule type" value="Genomic_DNA"/>
</dbReference>
<dbReference type="EMBL" id="KF981397">
    <property type="protein sequence ID" value="AHV79394.1"/>
    <property type="molecule type" value="Genomic_DNA"/>
</dbReference>
<dbReference type="EMBL" id="KF981398">
    <property type="protein sequence ID" value="AHV79395.1"/>
    <property type="molecule type" value="Genomic_DNA"/>
</dbReference>
<dbReference type="EMBL" id="KF981399">
    <property type="protein sequence ID" value="AHV79396.1"/>
    <property type="molecule type" value="Genomic_DNA"/>
</dbReference>
<dbReference type="EMBL" id="KF981400">
    <property type="protein sequence ID" value="AHV79397.1"/>
    <property type="molecule type" value="Genomic_DNA"/>
</dbReference>
<dbReference type="EMBL" id="KF981401">
    <property type="protein sequence ID" value="AHV79398.1"/>
    <property type="molecule type" value="Genomic_DNA"/>
</dbReference>
<dbReference type="EMBL" id="KF981402">
    <property type="protein sequence ID" value="AHV79399.1"/>
    <property type="molecule type" value="Genomic_DNA"/>
</dbReference>
<dbReference type="EMBL" id="KF981403">
    <property type="protein sequence ID" value="AHV79400.1"/>
    <property type="molecule type" value="Genomic_DNA"/>
</dbReference>
<dbReference type="EMBL" id="KF981404">
    <property type="protein sequence ID" value="AHV79401.1"/>
    <property type="molecule type" value="Genomic_DNA"/>
</dbReference>
<dbReference type="EMBL" id="KF981405">
    <property type="protein sequence ID" value="AHV79402.1"/>
    <property type="molecule type" value="Genomic_DNA"/>
</dbReference>
<dbReference type="EMBL" id="KF981406">
    <property type="protein sequence ID" value="AHV79403.1"/>
    <property type="molecule type" value="Genomic_DNA"/>
</dbReference>
<dbReference type="EMBL" id="KF981407">
    <property type="protein sequence ID" value="AHV79404.1"/>
    <property type="molecule type" value="Genomic_DNA"/>
</dbReference>
<dbReference type="EMBL" id="KF981408">
    <property type="protein sequence ID" value="AHV79405.1"/>
    <property type="molecule type" value="Genomic_DNA"/>
</dbReference>
<dbReference type="EMBL" id="KF981409">
    <property type="protein sequence ID" value="AHV79406.1"/>
    <property type="molecule type" value="Genomic_DNA"/>
</dbReference>
<dbReference type="EMBL" id="KF981410">
    <property type="protein sequence ID" value="AHV79407.1"/>
    <property type="molecule type" value="Genomic_DNA"/>
</dbReference>
<dbReference type="EMBL" id="KF981411">
    <property type="protein sequence ID" value="AHV79408.1"/>
    <property type="molecule type" value="Genomic_DNA"/>
</dbReference>
<dbReference type="EMBL" id="KF981412">
    <property type="protein sequence ID" value="AHV79409.1"/>
    <property type="molecule type" value="Genomic_DNA"/>
</dbReference>
<dbReference type="EMBL" id="KF981413">
    <property type="protein sequence ID" value="AHV79410.1"/>
    <property type="molecule type" value="Genomic_DNA"/>
</dbReference>
<dbReference type="EMBL" id="KF981414">
    <property type="protein sequence ID" value="AHV79411.1"/>
    <property type="molecule type" value="Genomic_DNA"/>
</dbReference>
<dbReference type="EMBL" id="KF981415">
    <property type="protein sequence ID" value="AHV79412.1"/>
    <property type="molecule type" value="Genomic_DNA"/>
</dbReference>
<dbReference type="EMBL" id="KF981416">
    <property type="protein sequence ID" value="AHV79413.1"/>
    <property type="molecule type" value="Genomic_DNA"/>
</dbReference>
<dbReference type="EMBL" id="KF981417">
    <property type="protein sequence ID" value="AHV79414.1"/>
    <property type="molecule type" value="Genomic_DNA"/>
</dbReference>
<dbReference type="EMBL" id="KF981418">
    <property type="protein sequence ID" value="AHV79415.1"/>
    <property type="molecule type" value="Genomic_DNA"/>
</dbReference>
<dbReference type="EMBL" id="KF981419">
    <property type="protein sequence ID" value="AHV79416.1"/>
    <property type="molecule type" value="Genomic_DNA"/>
</dbReference>
<dbReference type="EMBL" id="KF981420">
    <property type="protein sequence ID" value="AHV79417.1"/>
    <property type="molecule type" value="Genomic_DNA"/>
</dbReference>
<dbReference type="EMBL" id="KF981421">
    <property type="protein sequence ID" value="AHV79418.1"/>
    <property type="molecule type" value="Genomic_DNA"/>
</dbReference>
<dbReference type="EMBL" id="KF981422">
    <property type="protein sequence ID" value="AHV79419.1"/>
    <property type="molecule type" value="Genomic_DNA"/>
</dbReference>
<dbReference type="EMBL" id="KF981423">
    <property type="protein sequence ID" value="AHV79420.1"/>
    <property type="molecule type" value="Genomic_DNA"/>
</dbReference>
<dbReference type="EMBL" id="KF981424">
    <property type="protein sequence ID" value="AHV79421.1"/>
    <property type="molecule type" value="Genomic_DNA"/>
</dbReference>
<dbReference type="EMBL" id="KF981425">
    <property type="protein sequence ID" value="AHV79422.1"/>
    <property type="molecule type" value="Genomic_DNA"/>
</dbReference>
<dbReference type="EMBL" id="KF981426">
    <property type="protein sequence ID" value="AHV79423.1"/>
    <property type="molecule type" value="Genomic_DNA"/>
</dbReference>
<dbReference type="EMBL" id="KF981427">
    <property type="protein sequence ID" value="AHV79424.1"/>
    <property type="molecule type" value="Genomic_DNA"/>
</dbReference>
<dbReference type="EMBL" id="KF981428">
    <property type="protein sequence ID" value="AHV79425.1"/>
    <property type="molecule type" value="Genomic_DNA"/>
</dbReference>
<dbReference type="EMBL" id="KF981429">
    <property type="protein sequence ID" value="AHV79426.1"/>
    <property type="molecule type" value="Genomic_DNA"/>
</dbReference>
<dbReference type="EMBL" id="KF981430">
    <property type="protein sequence ID" value="AHV79427.1"/>
    <property type="molecule type" value="Genomic_DNA"/>
</dbReference>
<dbReference type="EMBL" id="KF981431">
    <property type="protein sequence ID" value="AHV79428.1"/>
    <property type="molecule type" value="Genomic_DNA"/>
</dbReference>
<dbReference type="EMBL" id="KF981432">
    <property type="protein sequence ID" value="AHV79429.1"/>
    <property type="molecule type" value="Genomic_DNA"/>
</dbReference>
<dbReference type="EMBL" id="KF981433">
    <property type="protein sequence ID" value="AHV79430.1"/>
    <property type="molecule type" value="Genomic_DNA"/>
</dbReference>
<dbReference type="PDB" id="2WMC">
    <property type="method" value="X-ray"/>
    <property type="resolution" value="2.20 A"/>
    <property type="chains" value="A/B/C/D/E/F/G/H=51-228"/>
</dbReference>
<dbReference type="PDBsum" id="2WMC"/>
<dbReference type="SMR" id="Q0GRC4"/>
<dbReference type="EvolutionaryTrace" id="Q0GRC4"/>
<dbReference type="GO" id="GO:0005737">
    <property type="term" value="C:cytoplasm"/>
    <property type="evidence" value="ECO:0000314"/>
    <property type="project" value="UniProtKB"/>
</dbReference>
<dbReference type="GO" id="GO:0016281">
    <property type="term" value="C:eukaryotic translation initiation factor 4F complex"/>
    <property type="evidence" value="ECO:0007669"/>
    <property type="project" value="TreeGrafter"/>
</dbReference>
<dbReference type="GO" id="GO:0005634">
    <property type="term" value="C:nucleus"/>
    <property type="evidence" value="ECO:0000314"/>
    <property type="project" value="UniProtKB"/>
</dbReference>
<dbReference type="GO" id="GO:0000340">
    <property type="term" value="F:RNA 7-methylguanosine cap binding"/>
    <property type="evidence" value="ECO:0007669"/>
    <property type="project" value="TreeGrafter"/>
</dbReference>
<dbReference type="GO" id="GO:0003723">
    <property type="term" value="F:RNA binding"/>
    <property type="evidence" value="ECO:0000314"/>
    <property type="project" value="UniProtKB"/>
</dbReference>
<dbReference type="GO" id="GO:0003743">
    <property type="term" value="F:translation initiation factor activity"/>
    <property type="evidence" value="ECO:0000314"/>
    <property type="project" value="UniProtKB"/>
</dbReference>
<dbReference type="GO" id="GO:0051607">
    <property type="term" value="P:defense response to virus"/>
    <property type="evidence" value="ECO:0000314"/>
    <property type="project" value="UniProtKB"/>
</dbReference>
<dbReference type="GO" id="GO:0006417">
    <property type="term" value="P:regulation of translation"/>
    <property type="evidence" value="ECO:0007669"/>
    <property type="project" value="UniProtKB-KW"/>
</dbReference>
<dbReference type="GO" id="GO:0006413">
    <property type="term" value="P:translational initiation"/>
    <property type="evidence" value="ECO:0000314"/>
    <property type="project" value="UniProtKB"/>
</dbReference>
<dbReference type="FunFam" id="3.30.760.10:FF:000003">
    <property type="entry name" value="Eukaryotic translation initiation factor 4E"/>
    <property type="match status" value="1"/>
</dbReference>
<dbReference type="Gene3D" id="3.30.760.10">
    <property type="entry name" value="RNA Cap, Translation Initiation Factor Eif4e"/>
    <property type="match status" value="1"/>
</dbReference>
<dbReference type="InterPro" id="IPR023398">
    <property type="entry name" value="TIF_eIF4e-like"/>
</dbReference>
<dbReference type="InterPro" id="IPR001040">
    <property type="entry name" value="TIF_eIF_4E"/>
</dbReference>
<dbReference type="InterPro" id="IPR019770">
    <property type="entry name" value="TIF_eIF_4E_CS"/>
</dbReference>
<dbReference type="PANTHER" id="PTHR11960">
    <property type="entry name" value="EUKARYOTIC TRANSLATION INITIATION FACTOR 4E RELATED"/>
    <property type="match status" value="1"/>
</dbReference>
<dbReference type="PANTHER" id="PTHR11960:SF8">
    <property type="entry name" value="EUKARYOTIC TRANSLATION INITIATION FACTOR 4E1-RELATED"/>
    <property type="match status" value="1"/>
</dbReference>
<dbReference type="Pfam" id="PF01652">
    <property type="entry name" value="IF4E"/>
    <property type="match status" value="1"/>
</dbReference>
<dbReference type="SUPFAM" id="SSF55418">
    <property type="entry name" value="eIF4e-like"/>
    <property type="match status" value="1"/>
</dbReference>
<dbReference type="PROSITE" id="PS00813">
    <property type="entry name" value="IF4E"/>
    <property type="match status" value="1"/>
</dbReference>
<gene>
    <name evidence="9" type="primary">eIF4E</name>
    <name evidence="9" type="synonym">SBM-1</name>
    <name evidence="8" type="synonym">WLV</name>
</gene>
<proteinExistence type="evidence at protein level"/>
<keyword id="KW-0002">3D-structure</keyword>
<keyword id="KW-0963">Cytoplasm</keyword>
<keyword id="KW-1015">Disulfide bond</keyword>
<keyword id="KW-0945">Host-virus interaction</keyword>
<keyword id="KW-0396">Initiation factor</keyword>
<keyword id="KW-0539">Nucleus</keyword>
<keyword id="KW-0611">Plant defense</keyword>
<keyword id="KW-0648">Protein biosynthesis</keyword>
<keyword id="KW-0694">RNA-binding</keyword>
<keyword id="KW-0810">Translation regulation</keyword>
<feature type="chain" id="PRO_0000454069" description="Eukaryotic translation initiation factor 4E-1">
    <location>
        <begin position="1"/>
        <end position="228"/>
    </location>
</feature>
<feature type="region of interest" description="EIF4G-binding" evidence="2">
    <location>
        <begin position="53"/>
        <end position="56"/>
    </location>
</feature>
<feature type="region of interest" description="EIF4G-binding" evidence="2">
    <location>
        <begin position="63"/>
        <end position="99"/>
    </location>
</feature>
<feature type="region of interest" description="EIF4G-binding" evidence="2">
    <location>
        <begin position="147"/>
        <end position="156"/>
    </location>
</feature>
<feature type="binding site" evidence="5 16">
    <location>
        <begin position="71"/>
        <end position="76"/>
    </location>
    <ligand>
        <name>mRNA</name>
        <dbReference type="ChEBI" id="CHEBI:33699"/>
    </ligand>
    <ligandPart>
        <name>N(7)-methylguanosine 5'-triphosphate group</name>
        <dbReference type="ChEBI" id="CHEBI:74429"/>
        <note>m7GTP residue in mRNA cap</note>
    </ligandPart>
</feature>
<feature type="binding site" evidence="1">
    <location>
        <position position="103"/>
    </location>
    <ligand>
        <name>mRNA</name>
        <dbReference type="ChEBI" id="CHEBI:33699"/>
    </ligand>
    <ligandPart>
        <name>N(7)-methylguanosine 5'-triphosphate group</name>
        <dbReference type="ChEBI" id="CHEBI:74429"/>
        <note>m7GTP residue in mRNA cap</note>
    </ligandPart>
</feature>
<feature type="binding site" evidence="5 16">
    <location>
        <begin position="121"/>
        <end position="122"/>
    </location>
    <ligand>
        <name>mRNA</name>
        <dbReference type="ChEBI" id="CHEBI:33699"/>
    </ligand>
    <ligandPart>
        <name>N(7)-methylguanosine 5'-triphosphate group</name>
        <dbReference type="ChEBI" id="CHEBI:74429"/>
        <note>m7GTP residue in mRNA cap</note>
    </ligandPart>
</feature>
<feature type="binding site" evidence="5 16">
    <location>
        <begin position="171"/>
        <end position="176"/>
    </location>
    <ligand>
        <name>mRNA</name>
        <dbReference type="ChEBI" id="CHEBI:33699"/>
    </ligand>
    <ligandPart>
        <name>N(7)-methylguanosine 5'-triphosphate group</name>
        <dbReference type="ChEBI" id="CHEBI:74429"/>
        <note>m7GTP residue in mRNA cap</note>
    </ligandPart>
</feature>
<feature type="binding site" evidence="5 16">
    <location>
        <begin position="216"/>
        <end position="220"/>
    </location>
    <ligand>
        <name>mRNA</name>
        <dbReference type="ChEBI" id="CHEBI:33699"/>
    </ligand>
    <ligandPart>
        <name>N(7)-methylguanosine 5'-triphosphate group</name>
        <dbReference type="ChEBI" id="CHEBI:74429"/>
        <note>m7GTP residue in mRNA cap</note>
    </ligandPart>
</feature>
<feature type="disulfide bond" evidence="2">
    <location>
        <begin position="126"/>
        <end position="164"/>
    </location>
</feature>
<feature type="sequence variant" description="In strain: PI 269818, alleles resistant-2, sbm1, eIF4E(R) and A-6. In strain: JI 1405, allele resistant-1. In strain: JI 2009, alleles susceptible and SBM1." evidence="3 5">
    <original>D</original>
    <variation>E</variation>
    <location>
        <position position="5"/>
    </location>
</feature>
<feature type="sequence variant" description="In strain: VIR 1589, allele C-2." evidence="6">
    <original>N</original>
    <variation>I</variation>
    <location>
        <position position="19"/>
    </location>
</feature>
<feature type="sequence variant" description="In strain: PI 378158, allele A-4. In strain: JI 1370, allele B-2." evidence="6">
    <original>V</original>
    <variation>A</variation>
    <location>
        <position position="23"/>
    </location>
</feature>
<feature type="sequence variant" description="In strain: JI 1090, alleles B-3." evidence="6">
    <original>V</original>
    <variation>D</variation>
    <location>
        <position position="23"/>
    </location>
</feature>
<feature type="sequence variant" description="In strain: JI 1845, allele S-1." evidence="6">
    <original>IEDDN</original>
    <variation>FEDDD</variation>
    <location>
        <begin position="24"/>
        <end position="28"/>
    </location>
</feature>
<feature type="sequence variant" description="In strain: PI 347492. In strain: PI 347422, ATC-6931 and PI 347484, allele S-3." evidence="6">
    <original>E</original>
    <variation>A</variation>
    <location>
        <position position="34"/>
    </location>
</feature>
<feature type="sequence variant" description="In strain: JI 1010, allele S-6. In strain: JI 1007, allele S-5. In strain: JI 1090, allele B-3. In strain: JI 1370, allele B-2." evidence="6">
    <original>V</original>
    <variation>A</variation>
    <location>
        <position position="49"/>
    </location>
</feature>
<feature type="sequence variant" description="In strain: Brutus." evidence="4">
    <original>N</original>
    <variation>S</variation>
    <location>
        <position position="57"/>
    </location>
</feature>
<feature type="sequence variant" description="In strain: Bonneville." evidence="4">
    <original>SWTFL</original>
    <variation>PWTFW</variation>
    <location>
        <begin position="58"/>
        <end position="62"/>
    </location>
</feature>
<feature type="sequence variant" description="In strain: PI 269818, alleles resistant-2, sbm1, eIF4E(R) and A-6. In strain: JI 2009, alleles SBM1 and susceptible. In strain: Dark skinned Perfection. In strain: Brutus. In strain: JI 2643, Fjord, JI 261, JI 194, JI 205, JI 1109, JI 267, PI 505122, PI 639981, JI 1104, JI 1108, ATC-6927, ATC-7173, JI 1758, JI 1030, JI 190, PI 357290, JI 193, JI 2607, JI 2571, JI 1107, JI 1085, JI 2065, JI 1121, JI 1756, JI 182 and JI 3157, alleles S-1, eIF4E(S) and C-1. In strain: VIR 1589, allele C-2. In strain: JI 2630, allele S-1. In strain: JI 1632, allele S-4. In strain: JI 1091 and JI 3001, allele S-1. In strain: JI 1010, allele S-6. In strain: JI 1007, allele S-5. In strain: JI 2646, allele S-7. In strain: JI 1845, allele S-1. In strain: PI 347328, allele S-2. In strain: PI 347422, ATC-6931 and PI 347484, allele S-3. In strain: PI 269774, allele A-7. In strain: CGN-3302, allele A-1. In strain: JI 1194, CGN-3311, ATC-7140, ATC-3275, ATC-7134, IPK-477 and CGN-3319, allele B-1. In strain: JI 1090, allele B-3. In strain: JI 1370, allele B-2." evidence="3 4 5 6 7">
    <original>L</original>
    <variation>W</variation>
    <location>
        <position position="62"/>
    </location>
</feature>
<feature type="sequence variant" description="In strain: PI 347328, allele S-2." evidence="6">
    <original>DDWGS</original>
    <variation>AAWGR</variation>
    <location>
        <begin position="73"/>
        <end position="77"/>
    </location>
</feature>
<feature type="sequence variant" description="In strain: PI 269818, alleles resistant-2, sbm1, eIF4E(R) and A-6. In strain: PI 269774, allele A-7." evidence="3 5 6">
    <original>DDWGS</original>
    <variation>PDWG</variation>
    <location>
        <begin position="73"/>
        <end position="77"/>
    </location>
</feature>
<feature type="sequence variant" description="In strain: JI 2009, alleles susceptible and SBM1. In strain: Dark skinned Perfection. In strain: Bonneville. In strain: Brutus. In strain: JI 2643, Fjord, JI 261, JI 194, JI 205, JI 1109, JI 267, PI 505122, PI 639981, JI 1104, JI 1108, ATC-6927, ATC-7173, JI 1758, JI 1030, JI 190, PI 357290, JI 193, JI 2607, JI 2571, JI 1107, JI 1085, JI 2065, JI 1121, JI 1756, JI 182 and JI 3157, alleles S-1, eIF4E(S) and C-1. In strain: VIR 1589, allele C-2. In strain: JI 2630, allele S-1. In strain: JI 1632, allele S-4. In strain: JI 1091 and JI 3001, allele S-1. In strain: JI 1010, allele S-6. In strain: JI 1007, allele S-5. In strain: JI 2646, allele S-7. In strain: JI 1845, allele S-1. In strain: PI 347422, ATC-6931 and PI 347484, allele S-3. In strain: JI 1194, CGN-3311, ATC-7140, ATC-3275, ATC-7134, IPK-477 and CGN-3319, allele B-1. In strain: JI 1090, allele B-3. In strain: JI 1370, allele B-2." evidence="3 4 5 6 7">
    <original>DD</original>
    <variation>AA</variation>
    <location>
        <begin position="73"/>
        <end position="74"/>
    </location>
</feature>
<feature type="sequence variant" description="In strain: CGN-3302, allele A-1." evidence="6">
    <original>D</original>
    <variation>V</variation>
    <location>
        <position position="73"/>
    </location>
</feature>
<feature type="sequence variant" description="In strain: JI 1787, allele 1." evidence="6">
    <original>D</original>
    <variation>A</variation>
    <location>
        <position position="74"/>
    </location>
</feature>
<feature type="sequence variant" description="In strain: JI 2646, allele S-7." evidence="6">
    <original>S</original>
    <variation>C</variation>
    <location>
        <position position="86"/>
    </location>
</feature>
<feature type="sequence variant" description="In strain: Dark skinned Perfection." evidence="4">
    <original>VR</original>
    <variation>AG</variation>
    <location>
        <begin position="106"/>
        <end position="107"/>
    </location>
</feature>
<feature type="sequence variant" description="In strain: PI 269818, alleles resistant-2, sbm1, eIF4E(R) and A-6. In strain: JI 2009, alleles susceptible and SBM1. In strain: Bonneville. In strain: Brutus. In strain: JI 2643, Fjord, JI 261, JI 194, JI 205, JI 1109, JI 267, PI 505122, PI 639981, JI 1104, JI 1108, ATC-6927, ATC-7173, JI 1758, JI 1030, JI 190, PI 357290, JI 193, JI 2607, JI 2571, JI 1107, JI 1085, JI 2065, JI 1121, JI 1756, JI 182 and JI 3157, alleles S-1, eIF4E(S) and C-1. In strain: VIR 1589, allele C-2. In strain: JI 2630, allele S-1. In strain: JI 1632, allele S-4. In strain: JI 1091 and JI 3001, allele S-1. In strain: JI 1010, allele S-6. In strain: JI 1007, allele S-5. In strain: JI 2646, allele S-7. In strain: JI 1845, allele S-1. In strain: PI 347328, allele S-2. In strain: PI 347422, ATC-6931 and PI 347484, allele S-3. In strain: PI 269774, allele A-7. In strain: JI 1194, CGN-3311, ATC-7140, ATC-3275, ATC-7134, IPK-477 and CGN-3319, allele B-1. In strain: JI 1090, allele B-3. In strain: JI 1370, allele B-2." evidence="3 4 5 6 7">
    <original>R</original>
    <variation>G</variation>
    <location>
        <position position="107"/>
    </location>
</feature>
<feature type="sequence variant" description="In strain: PI 347464, allele A-5." evidence="6">
    <original>A</original>
    <variation>P</variation>
    <location>
        <position position="108"/>
    </location>
</feature>
<feature type="sequence variant" description="In strain: PI 347464, allele A-5." evidence="6">
    <original>H</original>
    <variation>R</variation>
    <location>
        <position position="115"/>
    </location>
</feature>
<feature type="sequence variant" description="In strain: Dark skinned Perfection." evidence="4">
    <original>L</original>
    <variation>S</variation>
    <location>
        <position position="149"/>
    </location>
</feature>
<feature type="sequence variant" description="In strain: JI 1007, allele S-5." evidence="6">
    <original>L</original>
    <variation>W</variation>
    <location>
        <position position="149"/>
    </location>
</feature>
<feature type="sequence variant" description="In strain: PI 347328, allele S-2." evidence="6">
    <original>I</original>
    <variation>T</variation>
    <location>
        <position position="163"/>
    </location>
</feature>
<feature type="sequence variant" description="In strain: Brutus." evidence="4">
    <original>KVR</original>
    <variation>NVG</variation>
    <location>
        <begin position="169"/>
        <end position="171"/>
    </location>
</feature>
<feature type="sequence variant" description="In strain: CGN-3302, allele A-1." evidence="6">
    <original>KV</original>
    <variation>NA</variation>
    <location>
        <begin position="169"/>
        <end position="170"/>
    </location>
</feature>
<feature type="sequence variant" description="In strain: PI 269818, alleles resistant-2, sbm1, eIF4E(R) and A-6. In strain: JI 2009, alleles susceptible and SBM1. In strain: Dark skinned Perfection. In strain: Bonneville. In strain: JI 2643, Fjord, JI 261, JI 194, JI 205, JI 1109, JI 267, PI 505122, PI 639981, JI 1104, JI 1108, ATC-6927, ATC-7173, JI 1758, JI 1030, JI 190, PI 357290, JI 193, JI 2607, JI 2571, JI 1107, JI 1085, JI 2065, JI 1121, JI 1756, JI 182 and JI 3157, alleles S-1, eIF4E(S) and C-1. In strain: VIR 1589, allele C-2. In strain: JI 2630, allele S-1. In strain: JI 1632, allele S-4. In strain: JI 1091 and JI 3001, allele S-1. In strain: JI 1010, allele S-6. In strain: JI 1007, allele S-5. In strain: JI 2646, allele S-7. In strain: JI 1845, allele S-1. In strain: PI 347328, allele S-2. In strain: PI 347422, ATC-6931 and PI 347484, allele S-3. In strain: JI 1194, CGN-3311, ATC-7140, ATC-3275, ATC-7134, IPK-477 and CGN-3319, allele B-1. In strain: JI 1090, allele B-3. In strain: JI 1370, allele B-2." evidence="3 4 5 6 7">
    <original>K</original>
    <variation>N</variation>
    <location>
        <position position="169"/>
    </location>
</feature>
<feature type="sequence variant" description="In strain: JI 1546, allele A-2." evidence="6">
    <original>N</original>
    <variation>H</variation>
    <location>
        <position position="186"/>
    </location>
</feature>
<feature type="sequence variant" description="In strain: Dark skinned Perfection." evidence="4">
    <original>L</original>
    <variation>P</variation>
    <location>
        <position position="201"/>
    </location>
</feature>
<feature type="sequence variant" description="In strain: Dark skinned Perfection." evidence="4">
    <original>T</original>
    <variation>A</variation>
    <location>
        <position position="206"/>
    </location>
</feature>
<feature type="sequence variant" description="In strain: JI 1632, allele S-4. In strain: JI 1194, CGN-3311, ATC-7140, ATC-3275, ATC-7134, IPK-477 and CGN-3319, allele B-1." evidence="6">
    <original>M</original>
    <variation>I</variation>
    <location>
        <position position="207"/>
    </location>
</feature>
<feature type="sequence variant" description="In strain: JI 1532. In strain: VIR 1589, allele C-2. In strain: JI 2630, allele S-1. In strain: JI 1787, allele A-1. In strain: JI 1546, allele A-2." evidence="6">
    <original>A</original>
    <variation>S</variation>
    <location>
        <position position="215"/>
    </location>
</feature>
<feature type="sequence variant" description="In strain: JI 1194, CGN-3311, ATC-7140, ATC-3275, ATC-7134, IPK-477 and CGN-3319, allele B-1." evidence="6">
    <original>LD</original>
    <variation>QE</variation>
    <location>
        <begin position="218"/>
        <end position="219"/>
    </location>
</feature>
<feature type="mutagenesis site" description="Resistance to pea seed-borne mosaic virus (PSbMV) and reduced translation activation." evidence="5">
    <original>F</original>
    <variation>A</variation>
    <location>
        <position position="63"/>
    </location>
</feature>
<feature type="mutagenesis site" description="Susceptibility to pea seed-borne mosaic virus (PSbMV) and normal translation activation." evidence="5">
    <original>D</original>
    <variation>A</variation>
    <location>
        <position position="64"/>
    </location>
</feature>
<feature type="mutagenesis site" description="Susceptibility to pea seed-borne mosaic virus (PSbMV) and normal translation activation." evidence="5">
    <original>T</original>
    <variation>Q</variation>
    <location>
        <position position="65"/>
    </location>
</feature>
<feature type="mutagenesis site" description="Susceptibility to pea seed-borne mosaic virus (PSbMV) and normal translation activation." evidence="5">
    <original>P</original>
    <variation>A</variation>
    <location>
        <position position="66"/>
    </location>
</feature>
<feature type="mutagenesis site" description="Partial susceptibility to pea seed-borne mosaic virus (PSbMV) and normal translation activation." evidence="5">
    <original>A</original>
    <variation>E</variation>
    <location>
        <position position="67"/>
    </location>
</feature>
<feature type="mutagenesis site" description="Susceptibility to pea seed-borne mosaic virus (PSbMV) and normal translation activation." evidence="5">
    <original>A</original>
    <variation>E</variation>
    <location>
        <position position="68"/>
    </location>
</feature>
<feature type="mutagenesis site" description="Susceptibility to pea seed-borne mosaic virus (PSbMV) and normal translation activation." evidence="5">
    <original>K</original>
    <variation>A</variation>
    <location>
        <position position="69"/>
    </location>
</feature>
<feature type="mutagenesis site" description="Resistance to pea seed-borne mosaic virus (PSbMV) and normal translation activation." evidence="5">
    <original>S</original>
    <variation>A</variation>
    <location>
        <position position="70"/>
    </location>
</feature>
<feature type="mutagenesis site" description="Resistance to pea seed-borne mosaic virus (PSbMV) and normal translation activation." evidence="5">
    <original>K</original>
    <variation>A</variation>
    <location>
        <position position="71"/>
    </location>
</feature>
<feature type="mutagenesis site" description="Susceptibility to pea seed-borne mosaic virus (PSbMV) and normal translation activation." evidence="5">
    <original>Q</original>
    <variation>A</variation>
    <location>
        <position position="72"/>
    </location>
</feature>
<feature type="mutagenesis site" description="Resistance to pea seed-borne mosaic virus (PSbMV) and altered translation activation." evidence="5">
    <original>W</original>
    <variation>A</variation>
    <location>
        <position position="75"/>
    </location>
</feature>
<feature type="mutagenesis site" description="Susceptibility to pea seed-borne mosaic virus (PSbMV) and slightly reduced translation activation." evidence="5">
    <original>W</original>
    <variation>F</variation>
    <location>
        <position position="75"/>
    </location>
</feature>
<feature type="mutagenesis site" description="Partial susceptibility to pea seed-borne mosaic virus (PSbMV) and normal translation activation." evidence="5">
    <original>D</original>
    <variation>A</variation>
    <location>
        <position position="109"/>
    </location>
</feature>
<feature type="mutagenesis site" description="Susceptibility to pea seed-borne mosaic virus (PSbMV) and slightly reduced translation activation." evidence="5">
    <original>Y</original>
    <variation>A</variation>
    <location>
        <position position="111"/>
    </location>
</feature>
<feature type="mutagenesis site" description="Partial susceptibility to pea seed-borne mosaic virus (PSbMV) and altered translation activation." evidence="5">
    <original>F</original>
    <variation>A</variation>
    <location>
        <position position="113"/>
    </location>
</feature>
<feature type="mutagenesis site" description="Susceptibility to pea seed-borne mosaic virus (PSbMV) and normal translation activation." evidence="5">
    <original>K</original>
    <variation>A</variation>
    <location>
        <position position="120"/>
    </location>
</feature>
<feature type="mutagenesis site" description="Resistance to pea seed-borne mosaic virus (PSbMV) and altered translation activation." evidence="5">
    <original>W</original>
    <variation>A</variation>
    <variation>F</variation>
    <location>
        <position position="121"/>
    </location>
</feature>
<feature type="mutagenesis site" description="Altered translation activation." evidence="5">
    <original>E</original>
    <variation>A</variation>
    <location>
        <position position="122"/>
    </location>
</feature>
<feature type="mutagenesis site" description="Resistance to pea seed-borne mosaic virus (PSbMV) and altered translation activation." evidence="5">
    <original>G</original>
    <variation>A</variation>
    <location>
        <position position="165"/>
    </location>
</feature>
<feature type="mutagenesis site" description="Resistance to pea seed-borne mosaic virus (PSbMV) and normal translation activation." evidence="5">
    <original>V</original>
    <variation>A</variation>
    <location>
        <position position="167"/>
    </location>
</feature>
<feature type="mutagenesis site" description="Susceptibility to pea seed-borne mosaic virus (PSbMV) and normal translation activation." evidence="5">
    <original>V</original>
    <variation>A</variation>
    <location>
        <position position="170"/>
    </location>
</feature>
<feature type="mutagenesis site" description="Resistance to pea seed-borne mosaic virus (PSbMV) and altered translation activation." evidence="5">
    <original>R</original>
    <variation>A</variation>
    <location>
        <position position="171"/>
    </location>
</feature>
<feature type="mutagenesis site" description="Susceptibility to pea seed-borne mosaic virus (PSbMV) and normal translation activation." evidence="5">
    <original>R</original>
    <variation>A</variation>
    <location>
        <position position="173"/>
    </location>
</feature>
<feature type="mutagenesis site" description="Susceptibility to pea seed-borne mosaic virus (PSbMV) and slightly reduced translation activation." evidence="5">
    <original>K</original>
    <variation>A</variation>
    <location>
        <position position="176"/>
    </location>
</feature>
<feature type="mutagenesis site" description="Susceptibility to pea seed-borne mosaic virus (PSbMV) and altered translation activation." evidence="5">
    <original>S</original>
    <variation>E</variation>
    <location>
        <position position="178"/>
    </location>
</feature>
<feature type="mutagenesis site" description="Resistance to pea seed-borne mosaic virus (PSbMV) and altered translation activation." evidence="5">
    <original>W</original>
    <variation>A</variation>
    <location>
        <position position="180"/>
    </location>
</feature>
<feature type="strand" evidence="17">
    <location>
        <begin position="54"/>
        <end position="64"/>
    </location>
</feature>
<feature type="helix" evidence="17">
    <location>
        <begin position="66"/>
        <end position="69"/>
    </location>
</feature>
<feature type="turn" evidence="17">
    <location>
        <begin position="75"/>
        <end position="78"/>
    </location>
</feature>
<feature type="strand" evidence="17">
    <location>
        <begin position="80"/>
        <end position="87"/>
    </location>
</feature>
<feature type="helix" evidence="17">
    <location>
        <begin position="88"/>
        <end position="95"/>
    </location>
</feature>
<feature type="helix" evidence="17">
    <location>
        <begin position="101"/>
        <end position="103"/>
    </location>
</feature>
<feature type="strand" evidence="17">
    <location>
        <begin position="109"/>
        <end position="114"/>
    </location>
</feature>
<feature type="turn" evidence="17">
    <location>
        <begin position="124"/>
        <end position="128"/>
    </location>
</feature>
<feature type="strand" evidence="17">
    <location>
        <begin position="130"/>
        <end position="137"/>
    </location>
</feature>
<feature type="helix" evidence="17">
    <location>
        <begin position="142"/>
        <end position="153"/>
    </location>
</feature>
<feature type="helix" evidence="17">
    <location>
        <begin position="160"/>
        <end position="162"/>
    </location>
</feature>
<feature type="strand" evidence="17">
    <location>
        <begin position="163"/>
        <end position="170"/>
    </location>
</feature>
<feature type="strand" evidence="17">
    <location>
        <begin position="172"/>
        <end position="182"/>
    </location>
</feature>
<feature type="helix" evidence="17">
    <location>
        <begin position="187"/>
        <end position="201"/>
    </location>
</feature>
<feature type="strand" evidence="17">
    <location>
        <begin position="207"/>
        <end position="211"/>
    </location>
</feature>
<feature type="helix" evidence="17">
    <location>
        <begin position="212"/>
        <end position="215"/>
    </location>
</feature>
<feature type="strand" evidence="17">
    <location>
        <begin position="225"/>
        <end position="228"/>
    </location>
</feature>
<sequence>MVVEDTPKSIITDDQITTNPNRVIEDDNNLEEGEILDEDDSSATSKPVVHQPHLLENSWTFLFDTPAAKSKQDDWGSSMRPIYTFSTVEEFWSIYNNIHHPGKLAVRADFYCFKHKIEPKWEDPICANGGKWTANYPKGKSDTSWLYTLLAMIGEQFDHGDEICGAVVKVRGRAEKISIWTKNASNEAAQVSIGKQWKEFLDYNETMGFIFHDDARKLDRNAKNKYVV</sequence>
<reference key="1">
    <citation type="journal article" date="2004" name="Plant J.">
        <title>The potyvirus recessive resistance gene, sbm1, identifies a novel role for translation initiation factor eIF4E in cell-to-cell trafficking.</title>
        <authorList>
            <person name="Gao Z."/>
            <person name="Johansen E."/>
            <person name="Eyers S."/>
            <person name="Thomas C.L."/>
            <person name="Noel Ellis T.H."/>
            <person name="Maule A.J."/>
        </authorList>
    </citation>
    <scope>NUCLEOTIDE SEQUENCE [MRNA]</scope>
    <scope>VARIANTS GLU-5; TRP-62; 73-ASP-ASP-74 DELINS ALA-ALA; 73-ASP--SER-77 DELINS PRO-ASP-TRP-GLY; GLY-107 AND ASN-169</scope>
    <scope>FUNCTION</scope>
    <scope>FUNCTION (MICROBIAL INFECTION)</scope>
    <scope>POLYMORPHISM</scope>
    <source>
        <strain>cv. JI 1405</strain>
        <strain>cv. JI 2009</strain>
        <strain>cv. PI 269818</strain>
    </source>
</reference>
<reference key="2">
    <citation type="journal article" date="2007" name="Mol. Plant Microbe Interact.">
        <title>The same allele of translation initiation factor 4E mediates resistance against two Potyvirus spp. in Pisum sativum.</title>
        <authorList>
            <person name="Bruun-Rasmussen M."/>
            <person name="Moeller I.S."/>
            <person name="Tulinius G."/>
            <person name="Hansen J.K.R."/>
            <person name="Lund O.S."/>
            <person name="Johansen I.E."/>
        </authorList>
    </citation>
    <scope>NUCLEOTIDE SEQUENCE [MRNA]</scope>
    <scope>FUNCTION</scope>
    <scope>FUNCTION (MICROBIAL INFECTION)</scope>
    <scope>VARIANTS SER-57; TRP-62; 58-SER--LEU-62 DELINS PRO-TRP-THR-PHE-TRP; TRP-62; 73-ASP-ASP-74 DELINS ALA-ALA; 106-VAL-ARG-107 DELINS ALA-GLY; GLY-107; SER-149; 169-LYS--ARG-171 DELINS ASN-VAL-GLY; ASN-169; PRO-201 AND ALA-206</scope>
    <scope>POLYMORPHISM</scope>
    <source>
        <strain>cv. Bonneville</strain>
        <strain>cv. Brutus</strain>
        <strain>cv. Dark skinned Perfection</strain>
        <strain>cv. PI 193835</strain>
        <strain>cv. PI 347464</strain>
    </source>
</reference>
<reference key="3">
    <citation type="journal article" date="2010" name="Mol. Breed.">
        <title>Marker assisted pea breeding: eIF4E allele specific markers to pea seed-borne mosaic virus (PSbMV) resistance.</title>
        <authorList>
            <person name="Smykal P."/>
            <person name="Safarova D."/>
            <person name="Navratil M."/>
            <person name="Dostalova R."/>
        </authorList>
        <dbReference type="AGRICOLA" id="IND44432414"/>
    </citation>
    <scope>NUCLEOTIDE SEQUENCE [GENOMIC DNA]</scope>
    <scope>VARIANTS TRP-62; 73-ASP-ASP-74 DELINS ALA-ALA; GLY-107 AND ASN-169</scope>
    <source>
        <strain>cv. Fjord</strain>
        <strain>cv. PI 193835</strain>
    </source>
</reference>
<reference key="4">
    <citation type="journal article" date="2014" name="PLoS ONE">
        <title>Geographical gradient of the eIF4E alleles conferring resistance to potyviruses in pea (Pisum) germplasm.</title>
        <authorList>
            <person name="Konecna E."/>
            <person name="Safarova D."/>
            <person name="Navratil M."/>
            <person name="Hanacek P."/>
            <person name="Coyne C."/>
            <person name="Flavell A."/>
            <person name="Vishnyakova M."/>
            <person name="Ambrose M."/>
            <person name="Redden R."/>
            <person name="Smykal P."/>
        </authorList>
    </citation>
    <scope>NUCLEOTIDE SEQUENCE [GENOMIC DNA]</scope>
    <scope>FUNCTION</scope>
    <scope>FUNCTION (MICROBIAL INFECTION)</scope>
    <scope>VARIANTS ILE-19; ALA-23; ASP-23; 24-ILE--ASN-28 DELINS PHE-GLU-ASP-ASP-ASP; ALA-34; ALA-49; TRP-62; VAL-73; 73-ASP-ASP-74 DELINS ALA-ALA; 73-ASP--SER-77 DELINS ALA-ALA-TRP-GLY-ARG; 73-ASP--SER-77 DELINS PRO-ASP-TRP-GLY; ALA-74; CYS-86; GLY-107; PRO-108; ARG-115; TRP-149; THR-163; ASN-169; 169-LYS-VAL-170 DELINS ASN-ALA; HIS-186; ILE-207; SER-215 AND 218-LEU-ASP-219 DELINS GLN-GLU</scope>
    <scope>POLYMORPHISM</scope>
    <source>
        <strain>cv. ATC-1044</strain>
        <strain>cv. ATC-3275</strain>
        <strain>cv. ATC-6927</strain>
        <strain>cv. ATC-6931</strain>
        <strain>cv. ATC-7134</strain>
        <strain>cv. ATC-7140</strain>
        <strain>cv. ATC-7173</strain>
        <strain>cv. CGN-3302</strain>
        <strain>cv. CGN-3311</strain>
        <strain>cv. CGN-3319</strain>
        <strain>cv. IPK-468</strain>
        <strain>cv. IPK-477</strain>
        <strain>cv. IPK-479</strain>
        <strain>cv. JI 1007</strain>
        <strain>cv. JI 1010</strain>
        <strain>cv. JI 1030</strain>
        <strain>cv. JI 1085</strain>
        <strain>cv. JI 1090</strain>
        <strain>cv. JI 1091</strain>
        <strain>cv. JI 1104</strain>
        <strain>cv. JI 1107</strain>
        <strain>cv. JI 1108</strain>
        <strain>cv. JI 1109</strain>
        <strain>cv. JI 1121</strain>
        <strain>cv. JI 1194</strain>
        <strain>cv. JI 1260</strain>
        <strain>cv. JI 1370</strain>
        <strain>cv. JI 1532</strain>
        <strain>cv. JI 1546</strain>
        <strain>cv. JI 1632</strain>
        <strain>cv. JI 1756</strain>
        <strain>cv. JI 1758</strain>
        <strain>cv. JI 1787</strain>
        <strain>cv. JI 1788</strain>
        <strain>cv. JI 1790</strain>
        <strain>cv. JI 182</strain>
        <strain>cv. JI 1845</strain>
        <strain>cv. JI 190</strain>
        <strain>cv. JI 193</strain>
        <strain>cv. JI 194</strain>
        <strain>cv. JI 205</strain>
        <strain>cv. JI 2065</strain>
        <strain>cv. JI 2571</strain>
        <strain>cv. JI 2607</strain>
        <strain>cv. JI 261</strain>
        <strain>cv. JI 2630</strain>
        <strain>cv. JI 2643</strain>
        <strain>cv. JI 2646</strain>
        <strain>cv. JI 267</strain>
        <strain>cv. JI 3001</strain>
        <strain>cv. JI 3157</strain>
        <strain>cv. JI 467</strain>
        <strain>cv. JI 967</strain>
        <strain>cv. PI 116056</strain>
        <strain>cv. PI 193584</strain>
        <strain>cv. PI 193586</strain>
        <strain>cv. PI 193835</strain>
        <strain>cv. PI 249645</strain>
        <strain>cv. PI 269774</strain>
        <strain>cv. PI 269818</strain>
        <strain>cv. PI 347328</strain>
        <strain>cv. PI 347422</strain>
        <strain>cv. PI 347464</strain>
        <strain>cv. PI 347484</strain>
        <strain>cv. PI 347492</strain>
        <strain>cv. PI 347494</strain>
        <strain>cv. PI 356991</strain>
        <strain>cv. PI 356992</strain>
        <strain>cv. PI 357290</strain>
        <strain>cv. PI 378158</strain>
        <strain>cv. PI 505122</strain>
        <strain>cv. PI 639981</strain>
        <strain>cv. VIR 1589</strain>
    </source>
</reference>
<reference key="5">
    <citation type="journal article" date="2014" name="Infect. Genet. Evol.">
        <title>Evolution of plant eukaryotic initiation factor 4E (eIF4E) and potyvirus genome-linked protein (VPg): a game of mirrors impacting resistance spectrum and durability.</title>
        <authorList>
            <person name="Moury B."/>
            <person name="Charron C."/>
            <person name="Janzac B."/>
            <person name="Simon V."/>
            <person name="Gallois J.L."/>
            <person name="Palloix A."/>
            <person name="Caranta C."/>
        </authorList>
    </citation>
    <scope>GENE FAMILY</scope>
    <scope>REVIEW</scope>
</reference>
<reference key="6">
    <citation type="journal article" date="2011" name="PLoS ONE">
        <title>Structure-based mutational analysis of eIF4E in relation to sbm1 resistance to pea seed-borne mosaic virus in pea.</title>
        <authorList>
            <person name="Ashby J.A."/>
            <person name="Stevenson C.E.M."/>
            <person name="Jarvis G.E."/>
            <person name="Lawson D.M."/>
            <person name="Maule A.J."/>
        </authorList>
    </citation>
    <scope>X-RAY CRYSTALLOGRAPHY (2.20 ANGSTROMS) OF 52-228 IN COMPLEX WITH 7-METHYLGUANOSINE</scope>
    <scope>FUNCTION</scope>
    <scope>FUNCTION (MICROBIAL INFECTION)</scope>
    <scope>INTERACTION WITH POTYVIRUS VPG</scope>
    <scope>VARIANTS GLU-5; TRP-62; 73-ASP-ASP-74 DELINS ALA-ALA; 73-ASP--SER-77 DELINS PRO-ASP-TRP-GLY; GLY-107 AND ASN-169</scope>
    <scope>SUBCELLULAR LOCATION (MICROBIAL INFECTION)</scope>
    <scope>MUTAGENESIS OF PHE-63; ASP-64; THR-65; PRO-66; ALA-67; ALA-68; LYS-69; SER-70; LYS-71; GLN-72; TRP-75; ASP-109; TYR-111; PHE-113; LYS-120; TRP-121; GLU-122; GLY-165; VAL-167; VAL-170; ARG-171; ARG-173; LYS-176; SER-178 AND TRP-180</scope>
    <scope>POLYMORPHISM</scope>
    <source>
        <strain>cv. JI 1405</strain>
        <strain>cv. JI 2009</strain>
    </source>
</reference>